<feature type="chain" id="PRO_0000264460" description="UDP-3-O-acylglucosamine N-acyltransferase">
    <location>
        <begin position="1"/>
        <end position="337"/>
    </location>
</feature>
<feature type="active site" description="Proton acceptor" evidence="1">
    <location>
        <position position="238"/>
    </location>
</feature>
<keyword id="KW-0012">Acyltransferase</keyword>
<keyword id="KW-0441">Lipid A biosynthesis</keyword>
<keyword id="KW-0444">Lipid biosynthesis</keyword>
<keyword id="KW-0443">Lipid metabolism</keyword>
<keyword id="KW-0677">Repeat</keyword>
<keyword id="KW-0808">Transferase</keyword>
<protein>
    <recommendedName>
        <fullName evidence="1">UDP-3-O-acylglucosamine N-acyltransferase</fullName>
        <ecNumber evidence="1">2.3.1.191</ecNumber>
    </recommendedName>
</protein>
<name>LPXD_XANOM</name>
<dbReference type="EC" id="2.3.1.191" evidence="1"/>
<dbReference type="EMBL" id="AP008229">
    <property type="protein sequence ID" value="BAE68612.1"/>
    <property type="molecule type" value="Genomic_DNA"/>
</dbReference>
<dbReference type="RefSeq" id="WP_011408323.1">
    <property type="nucleotide sequence ID" value="NC_007705.1"/>
</dbReference>
<dbReference type="SMR" id="Q2P4B5"/>
<dbReference type="KEGG" id="xom:XOO1857"/>
<dbReference type="HOGENOM" id="CLU_049865_0_1_6"/>
<dbReference type="UniPathway" id="UPA00973"/>
<dbReference type="GO" id="GO:0016020">
    <property type="term" value="C:membrane"/>
    <property type="evidence" value="ECO:0007669"/>
    <property type="project" value="GOC"/>
</dbReference>
<dbReference type="GO" id="GO:0016410">
    <property type="term" value="F:N-acyltransferase activity"/>
    <property type="evidence" value="ECO:0007669"/>
    <property type="project" value="InterPro"/>
</dbReference>
<dbReference type="GO" id="GO:0009245">
    <property type="term" value="P:lipid A biosynthetic process"/>
    <property type="evidence" value="ECO:0007669"/>
    <property type="project" value="UniProtKB-UniRule"/>
</dbReference>
<dbReference type="CDD" id="cd03352">
    <property type="entry name" value="LbH_LpxD"/>
    <property type="match status" value="1"/>
</dbReference>
<dbReference type="Gene3D" id="1.20.5.170">
    <property type="match status" value="1"/>
</dbReference>
<dbReference type="Gene3D" id="2.160.10.10">
    <property type="entry name" value="Hexapeptide repeat proteins"/>
    <property type="match status" value="1"/>
</dbReference>
<dbReference type="Gene3D" id="3.40.1390.10">
    <property type="entry name" value="MurE/MurF, N-terminal domain"/>
    <property type="match status" value="1"/>
</dbReference>
<dbReference type="HAMAP" id="MF_00523">
    <property type="entry name" value="LpxD"/>
    <property type="match status" value="1"/>
</dbReference>
<dbReference type="InterPro" id="IPR001451">
    <property type="entry name" value="Hexapep"/>
</dbReference>
<dbReference type="InterPro" id="IPR007691">
    <property type="entry name" value="LpxD"/>
</dbReference>
<dbReference type="InterPro" id="IPR011004">
    <property type="entry name" value="Trimer_LpxA-like_sf"/>
</dbReference>
<dbReference type="InterPro" id="IPR020573">
    <property type="entry name" value="UDP_GlcNAc_AcTrfase_non-rep"/>
</dbReference>
<dbReference type="NCBIfam" id="TIGR01853">
    <property type="entry name" value="lipid_A_lpxD"/>
    <property type="match status" value="1"/>
</dbReference>
<dbReference type="NCBIfam" id="NF002060">
    <property type="entry name" value="PRK00892.1"/>
    <property type="match status" value="1"/>
</dbReference>
<dbReference type="PANTHER" id="PTHR43378">
    <property type="entry name" value="UDP-3-O-ACYLGLUCOSAMINE N-ACYLTRANSFERASE"/>
    <property type="match status" value="1"/>
</dbReference>
<dbReference type="PANTHER" id="PTHR43378:SF2">
    <property type="entry name" value="UDP-3-O-ACYLGLUCOSAMINE N-ACYLTRANSFERASE 1, MITOCHONDRIAL-RELATED"/>
    <property type="match status" value="1"/>
</dbReference>
<dbReference type="Pfam" id="PF00132">
    <property type="entry name" value="Hexapep"/>
    <property type="match status" value="1"/>
</dbReference>
<dbReference type="Pfam" id="PF04613">
    <property type="entry name" value="LpxD"/>
    <property type="match status" value="1"/>
</dbReference>
<dbReference type="SUPFAM" id="SSF51161">
    <property type="entry name" value="Trimeric LpxA-like enzymes"/>
    <property type="match status" value="1"/>
</dbReference>
<reference key="1">
    <citation type="journal article" date="2005" name="Jpn. Agric. Res. Q.">
        <title>Genome sequence of Xanthomonas oryzae pv. oryzae suggests contribution of large numbers of effector genes and insertion sequences to its race diversity.</title>
        <authorList>
            <person name="Ochiai H."/>
            <person name="Inoue Y."/>
            <person name="Takeya M."/>
            <person name="Sasaki A."/>
            <person name="Kaku H."/>
        </authorList>
    </citation>
    <scope>NUCLEOTIDE SEQUENCE [LARGE SCALE GENOMIC DNA]</scope>
    <source>
        <strain>MAFF 311018</strain>
    </source>
</reference>
<comment type="function">
    <text evidence="1">Catalyzes the N-acylation of UDP-3-O-acylglucosamine using 3-hydroxyacyl-ACP as the acyl donor. Is involved in the biosynthesis of lipid A, a phosphorylated glycolipid that anchors the lipopolysaccharide to the outer membrane of the cell.</text>
</comment>
<comment type="catalytic activity">
    <reaction evidence="1">
        <text>a UDP-3-O-[(3R)-3-hydroxyacyl]-alpha-D-glucosamine + a (3R)-hydroxyacyl-[ACP] = a UDP-2-N,3-O-bis[(3R)-3-hydroxyacyl]-alpha-D-glucosamine + holo-[ACP] + H(+)</text>
        <dbReference type="Rhea" id="RHEA:53836"/>
        <dbReference type="Rhea" id="RHEA-COMP:9685"/>
        <dbReference type="Rhea" id="RHEA-COMP:9945"/>
        <dbReference type="ChEBI" id="CHEBI:15378"/>
        <dbReference type="ChEBI" id="CHEBI:64479"/>
        <dbReference type="ChEBI" id="CHEBI:78827"/>
        <dbReference type="ChEBI" id="CHEBI:137740"/>
        <dbReference type="ChEBI" id="CHEBI:137748"/>
        <dbReference type="EC" id="2.3.1.191"/>
    </reaction>
</comment>
<comment type="pathway">
    <text evidence="1">Bacterial outer membrane biogenesis; LPS lipid A biosynthesis.</text>
</comment>
<comment type="subunit">
    <text evidence="1">Homotrimer.</text>
</comment>
<comment type="similarity">
    <text evidence="1">Belongs to the transferase hexapeptide repeat family. LpxD subfamily.</text>
</comment>
<gene>
    <name evidence="1" type="primary">lpxD</name>
    <name type="ordered locus">XOO1857</name>
</gene>
<organism>
    <name type="scientific">Xanthomonas oryzae pv. oryzae (strain MAFF 311018)</name>
    <dbReference type="NCBI Taxonomy" id="342109"/>
    <lineage>
        <taxon>Bacteria</taxon>
        <taxon>Pseudomonadati</taxon>
        <taxon>Pseudomonadota</taxon>
        <taxon>Gammaproteobacteria</taxon>
        <taxon>Lysobacterales</taxon>
        <taxon>Lysobacteraceae</taxon>
        <taxon>Xanthomonas</taxon>
    </lineage>
</organism>
<accession>Q2P4B5</accession>
<evidence type="ECO:0000255" key="1">
    <source>
        <dbReference type="HAMAP-Rule" id="MF_00523"/>
    </source>
</evidence>
<proteinExistence type="inferred from homology"/>
<sequence>MRLTASAIAGQFGLTVLGDGSTEVSGVATLAHAGAGQLSFLSNPRYRPQLADSQAAVVVLRADDAEAAKGTALVAKDPYTAFAKIAALFDVAQVCEPGIHPSAFIDPTAQVSPGAHVGPFVSIGARSRVGDGCVIGTGSLIGADCVVDDGSELLARVTLVTRVRLGKRVRIHPGAVIGADGFGLAMDAGHWIKVPQLGGVVIGDDCEIGANTCIDRGALEDTVLEEDVRVDNLVQIAHNCRIGAHSAIAGCSGIAGSAKIGRYCLLGGHVGVVGHLEICDKVVITGKSVVRNSINEPGEYSSGTPLTDNRTWRKNAARFKQLDVLARRILAVGKEKE</sequence>